<reference key="1">
    <citation type="journal article" date="2014" name="Mol. Biol. Evol.">
        <title>Clawing through evolution: toxin diversification and convergence in the ancient lineage Chilopoda (centipedes).</title>
        <authorList>
            <person name="Undheim E.A."/>
            <person name="Jones A."/>
            <person name="Clauser K.R."/>
            <person name="Holland J.W."/>
            <person name="Pineda S.S."/>
            <person name="King G.F."/>
            <person name="Fry B.G."/>
        </authorList>
    </citation>
    <scope>NUCLEOTIDE SEQUENCE [MRNA]</scope>
    <scope>NOMENCLATURE</scope>
    <source>
        <tissue>Venom gland</tissue>
    </source>
</reference>
<evidence type="ECO:0000255" key="1"/>
<evidence type="ECO:0000256" key="2">
    <source>
        <dbReference type="SAM" id="MobiDB-lite"/>
    </source>
</evidence>
<evidence type="ECO:0000303" key="3">
    <source>
    </source>
</evidence>
<evidence type="ECO:0000305" key="4"/>
<evidence type="ECO:0000305" key="5">
    <source>
    </source>
</evidence>
<protein>
    <recommendedName>
        <fullName evidence="3">U-scoloptoxin(23)-Er1a</fullName>
        <shortName evidence="3">U-SLPTX(23)-Er1a</shortName>
    </recommendedName>
</protein>
<organism>
    <name type="scientific">Ethmostigmus rubripes</name>
    <name type="common">Giant centipede</name>
    <dbReference type="NCBI Taxonomy" id="62613"/>
    <lineage>
        <taxon>Eukaryota</taxon>
        <taxon>Metazoa</taxon>
        <taxon>Ecdysozoa</taxon>
        <taxon>Arthropoda</taxon>
        <taxon>Myriapoda</taxon>
        <taxon>Chilopoda</taxon>
        <taxon>Pleurostigmophora</taxon>
        <taxon>Scolopendromorpha</taxon>
        <taxon>Scolopendridae</taxon>
        <taxon>Ethmostigmus</taxon>
    </lineage>
</organism>
<sequence>MSLIVVRTHSFLFVLVLLLFASVFHSVDSQVFNPNGRYGRRDSASALSDASENKESSLGMKVYREISQDAQMENAEDRQFENQEYQS</sequence>
<dbReference type="GO" id="GO:0005576">
    <property type="term" value="C:extracellular region"/>
    <property type="evidence" value="ECO:0007669"/>
    <property type="project" value="UniProtKB-SubCell"/>
</dbReference>
<dbReference type="GO" id="GO:0090729">
    <property type="term" value="F:toxin activity"/>
    <property type="evidence" value="ECO:0007669"/>
    <property type="project" value="UniProtKB-KW"/>
</dbReference>
<proteinExistence type="inferred from homology"/>
<accession>P0DQF7</accession>
<keyword id="KW-0964">Secreted</keyword>
<keyword id="KW-0732">Signal</keyword>
<keyword id="KW-0800">Toxin</keyword>
<name>TXN1A_ETHRU</name>
<feature type="signal peptide" evidence="1">
    <location>
        <begin position="1"/>
        <end position="29"/>
    </location>
</feature>
<feature type="chain" id="PRO_0000446834" description="U-scoloptoxin(23)-Er1a" evidence="4">
    <location>
        <begin position="30"/>
        <end position="87"/>
    </location>
</feature>
<feature type="region of interest" description="Disordered" evidence="2">
    <location>
        <begin position="32"/>
        <end position="54"/>
    </location>
</feature>
<comment type="subcellular location">
    <subcellularLocation>
        <location evidence="5">Secreted</location>
    </subcellularLocation>
</comment>
<comment type="tissue specificity">
    <text evidence="5">Expressed by the venom gland.</text>
</comment>
<comment type="similarity">
    <text evidence="4">Belongs to the scoloptoxin-23 family.</text>
</comment>
<comment type="caution">
    <text evidence="5">All E.rubripes family members described in 'Undeheim et al., 2014' have not been imported into UniProtKB. Please, refer to this paper to access them.</text>
</comment>
<comment type="online information" name="National Center for Biotechnology Information (NCBI)">
    <link uri="https://www.ncbi.nlm.nih.gov/nuccore/GASI01000173"/>
</comment>